<evidence type="ECO:0000255" key="1">
    <source>
        <dbReference type="HAMAP-Rule" id="MF_00294"/>
    </source>
</evidence>
<evidence type="ECO:0000305" key="2"/>
<organism>
    <name type="scientific">Mycoplasma genitalium (strain ATCC 33530 / DSM 19775 / NCTC 10195 / G37)</name>
    <name type="common">Mycoplasmoides genitalium</name>
    <dbReference type="NCBI Taxonomy" id="243273"/>
    <lineage>
        <taxon>Bacteria</taxon>
        <taxon>Bacillati</taxon>
        <taxon>Mycoplasmatota</taxon>
        <taxon>Mycoplasmoidales</taxon>
        <taxon>Mycoplasmoidaceae</taxon>
        <taxon>Mycoplasmoides</taxon>
    </lineage>
</organism>
<dbReference type="EMBL" id="L43967">
    <property type="protein sequence ID" value="AAC71547.1"/>
    <property type="molecule type" value="Genomic_DNA"/>
</dbReference>
<dbReference type="PIR" id="I64235">
    <property type="entry name" value="I64235"/>
</dbReference>
<dbReference type="RefSeq" id="WP_009885961.1">
    <property type="nucleotide sequence ID" value="NC_000908.2"/>
</dbReference>
<dbReference type="SMR" id="P47567"/>
<dbReference type="FunCoup" id="P47567">
    <property type="interactions" value="90"/>
</dbReference>
<dbReference type="STRING" id="243273.MG_325"/>
<dbReference type="GeneID" id="88282498"/>
<dbReference type="KEGG" id="mge:MG_325"/>
<dbReference type="eggNOG" id="COG0267">
    <property type="taxonomic scope" value="Bacteria"/>
</dbReference>
<dbReference type="HOGENOM" id="CLU_190949_0_2_14"/>
<dbReference type="InParanoid" id="P47567"/>
<dbReference type="OrthoDB" id="9801333at2"/>
<dbReference type="BioCyc" id="MGEN243273:G1GJ2-407-MONOMER"/>
<dbReference type="Proteomes" id="UP000000807">
    <property type="component" value="Chromosome"/>
</dbReference>
<dbReference type="GO" id="GO:0005737">
    <property type="term" value="C:cytoplasm"/>
    <property type="evidence" value="ECO:0007669"/>
    <property type="project" value="UniProtKB-ARBA"/>
</dbReference>
<dbReference type="GO" id="GO:1990904">
    <property type="term" value="C:ribonucleoprotein complex"/>
    <property type="evidence" value="ECO:0007669"/>
    <property type="project" value="UniProtKB-KW"/>
</dbReference>
<dbReference type="GO" id="GO:0005840">
    <property type="term" value="C:ribosome"/>
    <property type="evidence" value="ECO:0007669"/>
    <property type="project" value="UniProtKB-KW"/>
</dbReference>
<dbReference type="GO" id="GO:0003735">
    <property type="term" value="F:structural constituent of ribosome"/>
    <property type="evidence" value="ECO:0007669"/>
    <property type="project" value="InterPro"/>
</dbReference>
<dbReference type="GO" id="GO:0006412">
    <property type="term" value="P:translation"/>
    <property type="evidence" value="ECO:0007669"/>
    <property type="project" value="UniProtKB-UniRule"/>
</dbReference>
<dbReference type="Gene3D" id="2.20.28.120">
    <property type="entry name" value="Ribosomal protein L33"/>
    <property type="match status" value="1"/>
</dbReference>
<dbReference type="HAMAP" id="MF_00294">
    <property type="entry name" value="Ribosomal_bL33"/>
    <property type="match status" value="1"/>
</dbReference>
<dbReference type="InterPro" id="IPR001705">
    <property type="entry name" value="Ribosomal_bL33"/>
</dbReference>
<dbReference type="InterPro" id="IPR018264">
    <property type="entry name" value="Ribosomal_bL33_CS"/>
</dbReference>
<dbReference type="InterPro" id="IPR038584">
    <property type="entry name" value="Ribosomal_bL33_sf"/>
</dbReference>
<dbReference type="InterPro" id="IPR011332">
    <property type="entry name" value="Ribosomal_zn-bd"/>
</dbReference>
<dbReference type="NCBIfam" id="NF001764">
    <property type="entry name" value="PRK00504.1"/>
    <property type="match status" value="1"/>
</dbReference>
<dbReference type="NCBIfam" id="NF001860">
    <property type="entry name" value="PRK00595.1"/>
    <property type="match status" value="1"/>
</dbReference>
<dbReference type="NCBIfam" id="TIGR01023">
    <property type="entry name" value="rpmG_bact"/>
    <property type="match status" value="1"/>
</dbReference>
<dbReference type="Pfam" id="PF00471">
    <property type="entry name" value="Ribosomal_L33"/>
    <property type="match status" value="1"/>
</dbReference>
<dbReference type="SUPFAM" id="SSF57829">
    <property type="entry name" value="Zn-binding ribosomal proteins"/>
    <property type="match status" value="1"/>
</dbReference>
<dbReference type="PROSITE" id="PS00582">
    <property type="entry name" value="RIBOSOMAL_L33"/>
    <property type="match status" value="1"/>
</dbReference>
<gene>
    <name type="primary">rpmG1</name>
    <name type="synonym">rpl33</name>
    <name type="synonym">rpmG</name>
    <name type="ordered locus">MG325</name>
</gene>
<protein>
    <recommendedName>
        <fullName evidence="1">Large ribosomal subunit protein bL33A</fullName>
    </recommendedName>
    <alternativeName>
        <fullName>50S ribosomal protein L33 1</fullName>
    </alternativeName>
</protein>
<reference key="1">
    <citation type="journal article" date="1995" name="Science">
        <title>The minimal gene complement of Mycoplasma genitalium.</title>
        <authorList>
            <person name="Fraser C.M."/>
            <person name="Gocayne J.D."/>
            <person name="White O."/>
            <person name="Adams M.D."/>
            <person name="Clayton R.A."/>
            <person name="Fleischmann R.D."/>
            <person name="Bult C.J."/>
            <person name="Kerlavage A.R."/>
            <person name="Sutton G.G."/>
            <person name="Kelley J.M."/>
            <person name="Fritchman J.L."/>
            <person name="Weidman J.F."/>
            <person name="Small K.V."/>
            <person name="Sandusky M."/>
            <person name="Fuhrmann J.L."/>
            <person name="Nguyen D.T."/>
            <person name="Utterback T.R."/>
            <person name="Saudek D.M."/>
            <person name="Phillips C.A."/>
            <person name="Merrick J.M."/>
            <person name="Tomb J.-F."/>
            <person name="Dougherty B.A."/>
            <person name="Bott K.F."/>
            <person name="Hu P.-C."/>
            <person name="Lucier T.S."/>
            <person name="Peterson S.N."/>
            <person name="Smith H.O."/>
            <person name="Hutchison C.A. III"/>
            <person name="Venter J.C."/>
        </authorList>
    </citation>
    <scope>NUCLEOTIDE SEQUENCE [LARGE SCALE GENOMIC DNA]</scope>
    <source>
        <strain>ATCC 33530 / DSM 19775 / NCTC 10195 / G37</strain>
    </source>
</reference>
<sequence>MAVKRSTRLGCNECSEINYLTFKNVKKNPEKLALNKFCSRCRKVVLHKEVKRK</sequence>
<name>RL331_MYCGE</name>
<feature type="chain" id="PRO_0000170187" description="Large ribosomal subunit protein bL33A">
    <location>
        <begin position="1"/>
        <end position="53"/>
    </location>
</feature>
<comment type="similarity">
    <text evidence="2">Belongs to the bacterial ribosomal protein bL33 family.</text>
</comment>
<accession>P47567</accession>
<keyword id="KW-1185">Reference proteome</keyword>
<keyword id="KW-0687">Ribonucleoprotein</keyword>
<keyword id="KW-0689">Ribosomal protein</keyword>
<proteinExistence type="inferred from homology"/>